<gene>
    <name evidence="1" type="primary">yacG</name>
    <name type="ordered locus">SbBS512_E0094</name>
</gene>
<keyword id="KW-0479">Metal-binding</keyword>
<keyword id="KW-1185">Reference proteome</keyword>
<keyword id="KW-0862">Zinc</keyword>
<protein>
    <recommendedName>
        <fullName evidence="1">DNA gyrase inhibitor YacG</fullName>
    </recommendedName>
</protein>
<reference key="1">
    <citation type="submission" date="2008-05" db="EMBL/GenBank/DDBJ databases">
        <title>Complete sequence of Shigella boydii serotype 18 strain BS512.</title>
        <authorList>
            <person name="Rasko D.A."/>
            <person name="Rosovitz M."/>
            <person name="Maurelli A.T."/>
            <person name="Myers G."/>
            <person name="Seshadri R."/>
            <person name="Cer R."/>
            <person name="Jiang L."/>
            <person name="Ravel J."/>
            <person name="Sebastian Y."/>
        </authorList>
    </citation>
    <scope>NUCLEOTIDE SEQUENCE [LARGE SCALE GENOMIC DNA]</scope>
    <source>
        <strain>CDC 3083-94 / BS512</strain>
    </source>
</reference>
<accession>B2U2A6</accession>
<dbReference type="EMBL" id="CP001063">
    <property type="protein sequence ID" value="ACD06510.1"/>
    <property type="molecule type" value="Genomic_DNA"/>
</dbReference>
<dbReference type="RefSeq" id="WP_000005042.1">
    <property type="nucleotide sequence ID" value="NC_010658.1"/>
</dbReference>
<dbReference type="SMR" id="B2U2A6"/>
<dbReference type="STRING" id="344609.SbBS512_E0094"/>
<dbReference type="GeneID" id="93777334"/>
<dbReference type="KEGG" id="sbc:SbBS512_E0094"/>
<dbReference type="HOGENOM" id="CLU_178280_3_1_6"/>
<dbReference type="Proteomes" id="UP000001030">
    <property type="component" value="Chromosome"/>
</dbReference>
<dbReference type="GO" id="GO:0008657">
    <property type="term" value="F:DNA topoisomerase type II (double strand cut, ATP-hydrolyzing) inhibitor activity"/>
    <property type="evidence" value="ECO:0007669"/>
    <property type="project" value="UniProtKB-UniRule"/>
</dbReference>
<dbReference type="GO" id="GO:0008270">
    <property type="term" value="F:zinc ion binding"/>
    <property type="evidence" value="ECO:0007669"/>
    <property type="project" value="UniProtKB-UniRule"/>
</dbReference>
<dbReference type="GO" id="GO:0006355">
    <property type="term" value="P:regulation of DNA-templated transcription"/>
    <property type="evidence" value="ECO:0007669"/>
    <property type="project" value="InterPro"/>
</dbReference>
<dbReference type="FunFam" id="3.30.50.10:FF:000026">
    <property type="entry name" value="DNA gyrase inhibitor YacG"/>
    <property type="match status" value="1"/>
</dbReference>
<dbReference type="Gene3D" id="3.30.50.10">
    <property type="entry name" value="Erythroid Transcription Factor GATA-1, subunit A"/>
    <property type="match status" value="1"/>
</dbReference>
<dbReference type="HAMAP" id="MF_00649">
    <property type="entry name" value="DNA_gyrase_inhibitor_YacG"/>
    <property type="match status" value="1"/>
</dbReference>
<dbReference type="InterPro" id="IPR005584">
    <property type="entry name" value="DNA_gyrase_inhibitor_YacG"/>
</dbReference>
<dbReference type="InterPro" id="IPR013088">
    <property type="entry name" value="Znf_NHR/GATA"/>
</dbReference>
<dbReference type="NCBIfam" id="NF001638">
    <property type="entry name" value="PRK00418.1"/>
    <property type="match status" value="1"/>
</dbReference>
<dbReference type="PANTHER" id="PTHR36150">
    <property type="entry name" value="DNA GYRASE INHIBITOR YACG"/>
    <property type="match status" value="1"/>
</dbReference>
<dbReference type="PANTHER" id="PTHR36150:SF1">
    <property type="entry name" value="DNA GYRASE INHIBITOR YACG"/>
    <property type="match status" value="1"/>
</dbReference>
<dbReference type="Pfam" id="PF03884">
    <property type="entry name" value="YacG"/>
    <property type="match status" value="1"/>
</dbReference>
<dbReference type="SUPFAM" id="SSF57716">
    <property type="entry name" value="Glucocorticoid receptor-like (DNA-binding domain)"/>
    <property type="match status" value="1"/>
</dbReference>
<name>YACG_SHIB3</name>
<sequence length="65" mass="7306">MSETITVNCPTCGKTVVWGEISPFRPFCSKRCQLIDLGEWAAEEKRIPSSGDLSESDDWSEEPKQ</sequence>
<evidence type="ECO:0000255" key="1">
    <source>
        <dbReference type="HAMAP-Rule" id="MF_00649"/>
    </source>
</evidence>
<evidence type="ECO:0000256" key="2">
    <source>
        <dbReference type="SAM" id="MobiDB-lite"/>
    </source>
</evidence>
<comment type="function">
    <text evidence="1">Inhibits all the catalytic activities of DNA gyrase by preventing its interaction with DNA. Acts by binding directly to the C-terminal domain of GyrB, which probably disrupts DNA binding by the gyrase.</text>
</comment>
<comment type="cofactor">
    <cofactor evidence="1">
        <name>Zn(2+)</name>
        <dbReference type="ChEBI" id="CHEBI:29105"/>
    </cofactor>
    <text evidence="1">Binds 1 zinc ion.</text>
</comment>
<comment type="subunit">
    <text evidence="1">Interacts with GyrB.</text>
</comment>
<comment type="similarity">
    <text evidence="1">Belongs to the DNA gyrase inhibitor YacG family.</text>
</comment>
<organism>
    <name type="scientific">Shigella boydii serotype 18 (strain CDC 3083-94 / BS512)</name>
    <dbReference type="NCBI Taxonomy" id="344609"/>
    <lineage>
        <taxon>Bacteria</taxon>
        <taxon>Pseudomonadati</taxon>
        <taxon>Pseudomonadota</taxon>
        <taxon>Gammaproteobacteria</taxon>
        <taxon>Enterobacterales</taxon>
        <taxon>Enterobacteriaceae</taxon>
        <taxon>Shigella</taxon>
    </lineage>
</organism>
<feature type="chain" id="PRO_1000130981" description="DNA gyrase inhibitor YacG">
    <location>
        <begin position="1"/>
        <end position="65"/>
    </location>
</feature>
<feature type="region of interest" description="Disordered" evidence="2">
    <location>
        <begin position="45"/>
        <end position="65"/>
    </location>
</feature>
<feature type="compositionally biased region" description="Acidic residues" evidence="2">
    <location>
        <begin position="54"/>
        <end position="65"/>
    </location>
</feature>
<feature type="binding site" evidence="1">
    <location>
        <position position="9"/>
    </location>
    <ligand>
        <name>Zn(2+)</name>
        <dbReference type="ChEBI" id="CHEBI:29105"/>
    </ligand>
</feature>
<feature type="binding site" evidence="1">
    <location>
        <position position="12"/>
    </location>
    <ligand>
        <name>Zn(2+)</name>
        <dbReference type="ChEBI" id="CHEBI:29105"/>
    </ligand>
</feature>
<feature type="binding site" evidence="1">
    <location>
        <position position="28"/>
    </location>
    <ligand>
        <name>Zn(2+)</name>
        <dbReference type="ChEBI" id="CHEBI:29105"/>
    </ligand>
</feature>
<feature type="binding site" evidence="1">
    <location>
        <position position="32"/>
    </location>
    <ligand>
        <name>Zn(2+)</name>
        <dbReference type="ChEBI" id="CHEBI:29105"/>
    </ligand>
</feature>
<proteinExistence type="inferred from homology"/>